<protein>
    <recommendedName>
        <fullName evidence="1">Indole-3-glycerol phosphate synthase</fullName>
        <shortName evidence="1">IGPS</shortName>
        <ecNumber evidence="1">4.1.1.48</ecNumber>
    </recommendedName>
</protein>
<evidence type="ECO:0000255" key="1">
    <source>
        <dbReference type="HAMAP-Rule" id="MF_00134"/>
    </source>
</evidence>
<name>TRPC_MYCBT</name>
<proteinExistence type="inferred from homology"/>
<gene>
    <name evidence="1" type="primary">trpC</name>
    <name type="ordered locus">JTY_1624</name>
</gene>
<dbReference type="EC" id="4.1.1.48" evidence="1"/>
<dbReference type="EMBL" id="AP010918">
    <property type="protein sequence ID" value="BAH25912.1"/>
    <property type="molecule type" value="Genomic_DNA"/>
</dbReference>
<dbReference type="RefSeq" id="WP_003407990.1">
    <property type="nucleotide sequence ID" value="NZ_CP014566.1"/>
</dbReference>
<dbReference type="SMR" id="C1ANN3"/>
<dbReference type="KEGG" id="mbt:JTY_1624"/>
<dbReference type="HOGENOM" id="CLU_034247_0_0_11"/>
<dbReference type="UniPathway" id="UPA00035">
    <property type="reaction ID" value="UER00043"/>
</dbReference>
<dbReference type="GO" id="GO:0004425">
    <property type="term" value="F:indole-3-glycerol-phosphate synthase activity"/>
    <property type="evidence" value="ECO:0007669"/>
    <property type="project" value="UniProtKB-UniRule"/>
</dbReference>
<dbReference type="GO" id="GO:0004640">
    <property type="term" value="F:phosphoribosylanthranilate isomerase activity"/>
    <property type="evidence" value="ECO:0007669"/>
    <property type="project" value="TreeGrafter"/>
</dbReference>
<dbReference type="GO" id="GO:0000162">
    <property type="term" value="P:L-tryptophan biosynthetic process"/>
    <property type="evidence" value="ECO:0007669"/>
    <property type="project" value="UniProtKB-UniRule"/>
</dbReference>
<dbReference type="CDD" id="cd00331">
    <property type="entry name" value="IGPS"/>
    <property type="match status" value="1"/>
</dbReference>
<dbReference type="FunFam" id="3.20.20.70:FF:000024">
    <property type="entry name" value="Indole-3-glycerol phosphate synthase"/>
    <property type="match status" value="1"/>
</dbReference>
<dbReference type="Gene3D" id="3.20.20.70">
    <property type="entry name" value="Aldolase class I"/>
    <property type="match status" value="1"/>
</dbReference>
<dbReference type="HAMAP" id="MF_00134_B">
    <property type="entry name" value="IGPS_B"/>
    <property type="match status" value="1"/>
</dbReference>
<dbReference type="InterPro" id="IPR013785">
    <property type="entry name" value="Aldolase_TIM"/>
</dbReference>
<dbReference type="InterPro" id="IPR045186">
    <property type="entry name" value="Indole-3-glycerol_P_synth"/>
</dbReference>
<dbReference type="InterPro" id="IPR013798">
    <property type="entry name" value="Indole-3-glycerol_P_synth_dom"/>
</dbReference>
<dbReference type="InterPro" id="IPR001468">
    <property type="entry name" value="Indole-3-GlycerolPSynthase_CS"/>
</dbReference>
<dbReference type="InterPro" id="IPR011060">
    <property type="entry name" value="RibuloseP-bd_barrel"/>
</dbReference>
<dbReference type="NCBIfam" id="NF001369">
    <property type="entry name" value="PRK00278.1-1"/>
    <property type="match status" value="1"/>
</dbReference>
<dbReference type="NCBIfam" id="NF001377">
    <property type="entry name" value="PRK00278.2-4"/>
    <property type="match status" value="1"/>
</dbReference>
<dbReference type="PANTHER" id="PTHR22854:SF2">
    <property type="entry name" value="INDOLE-3-GLYCEROL-PHOSPHATE SYNTHASE"/>
    <property type="match status" value="1"/>
</dbReference>
<dbReference type="PANTHER" id="PTHR22854">
    <property type="entry name" value="TRYPTOPHAN BIOSYNTHESIS PROTEIN"/>
    <property type="match status" value="1"/>
</dbReference>
<dbReference type="Pfam" id="PF00218">
    <property type="entry name" value="IGPS"/>
    <property type="match status" value="1"/>
</dbReference>
<dbReference type="SUPFAM" id="SSF51366">
    <property type="entry name" value="Ribulose-phoshate binding barrel"/>
    <property type="match status" value="1"/>
</dbReference>
<dbReference type="PROSITE" id="PS00614">
    <property type="entry name" value="IGPS"/>
    <property type="match status" value="1"/>
</dbReference>
<organism>
    <name type="scientific">Mycobacterium bovis (strain BCG / Tokyo 172 / ATCC 35737 / TMC 1019)</name>
    <dbReference type="NCBI Taxonomy" id="561275"/>
    <lineage>
        <taxon>Bacteria</taxon>
        <taxon>Bacillati</taxon>
        <taxon>Actinomycetota</taxon>
        <taxon>Actinomycetes</taxon>
        <taxon>Mycobacteriales</taxon>
        <taxon>Mycobacteriaceae</taxon>
        <taxon>Mycobacterium</taxon>
        <taxon>Mycobacterium tuberculosis complex</taxon>
    </lineage>
</organism>
<accession>C1ANN3</accession>
<feature type="chain" id="PRO_1000198779" description="Indole-3-glycerol phosphate synthase">
    <location>
        <begin position="1"/>
        <end position="272"/>
    </location>
</feature>
<sequence>MSPATVLDSILEGVRADVAAREASVSLSEIKAAAAAAPPPLDVMAALREPGIGVIAEVKRASPSAGALATIADPAKLAQAYQDGGARIVSVVTEQRRFQGSLDDLDAVRASVSIPVLRKDFVVQPYQIHEARAHGADMLLLIVAALEQSVLVSMLDRTESLGMTALVEVHTEQEADRALKAGAKVIGVNARDLMTLDVDRDCFARIAPGLPSSVIRIAESGVRGTADLLAYAGAGADAVLVGEGLVTSGDPRAAVADLVTAGTHPSCPKPAR</sequence>
<reference key="1">
    <citation type="journal article" date="2009" name="Vaccine">
        <title>Whole genome sequence analysis of Mycobacterium bovis bacillus Calmette-Guerin (BCG) Tokyo 172: a comparative study of BCG vaccine substrains.</title>
        <authorList>
            <person name="Seki M."/>
            <person name="Honda I."/>
            <person name="Fujita I."/>
            <person name="Yano I."/>
            <person name="Yamamoto S."/>
            <person name="Koyama A."/>
        </authorList>
    </citation>
    <scope>NUCLEOTIDE SEQUENCE [LARGE SCALE GENOMIC DNA]</scope>
    <source>
        <strain>BCG / Tokyo 172 / ATCC 35737 / TMC 1019</strain>
    </source>
</reference>
<comment type="catalytic activity">
    <reaction evidence="1">
        <text>1-(2-carboxyphenylamino)-1-deoxy-D-ribulose 5-phosphate + H(+) = (1S,2R)-1-C-(indol-3-yl)glycerol 3-phosphate + CO2 + H2O</text>
        <dbReference type="Rhea" id="RHEA:23476"/>
        <dbReference type="ChEBI" id="CHEBI:15377"/>
        <dbReference type="ChEBI" id="CHEBI:15378"/>
        <dbReference type="ChEBI" id="CHEBI:16526"/>
        <dbReference type="ChEBI" id="CHEBI:58613"/>
        <dbReference type="ChEBI" id="CHEBI:58866"/>
        <dbReference type="EC" id="4.1.1.48"/>
    </reaction>
</comment>
<comment type="pathway">
    <text evidence="1">Amino-acid biosynthesis; L-tryptophan biosynthesis; L-tryptophan from chorismate: step 4/5.</text>
</comment>
<comment type="similarity">
    <text evidence="1">Belongs to the TrpC family.</text>
</comment>
<keyword id="KW-0028">Amino-acid biosynthesis</keyword>
<keyword id="KW-0057">Aromatic amino acid biosynthesis</keyword>
<keyword id="KW-0210">Decarboxylase</keyword>
<keyword id="KW-0456">Lyase</keyword>
<keyword id="KW-0822">Tryptophan biosynthesis</keyword>